<sequence>MPSFLRGILKPKERHHENKNHSQVSSDSLTSSYPTSPPKLEKTEAGSMVSSTTQKKTSHHAKPTITTKTEQSQRRPKIIDQVRRVESLGEQVSQKQRHMLDSLINKVYTGPLGEELVQTLYLRIWAMKETPESMKILQMREDIRDQYLRMKTERWLRTLIRGKKTKLRDFQKRYEEVHPYLMMERVEQIIMEEAWKLAAHIVQE</sequence>
<organismHost>
    <name type="scientific">Homo sapiens</name>
    <name type="common">Human</name>
    <dbReference type="NCBI Taxonomy" id="9606"/>
</organismHost>
<gene>
    <name type="primary">P/V/C</name>
</gene>
<accession>P28055</accession>
<name>C_PI1HC</name>
<protein>
    <recommendedName>
        <fullName>Protein C</fullName>
    </recommendedName>
</protein>
<feature type="chain" id="PRO_0000142799" description="Protein C">
    <location>
        <begin position="1"/>
        <end position="204"/>
    </location>
</feature>
<feature type="region of interest" description="Disordered" evidence="1">
    <location>
        <begin position="1"/>
        <end position="78"/>
    </location>
</feature>
<feature type="compositionally biased region" description="Basic and acidic residues" evidence="1">
    <location>
        <begin position="10"/>
        <end position="20"/>
    </location>
</feature>
<feature type="compositionally biased region" description="Low complexity" evidence="1">
    <location>
        <begin position="25"/>
        <end position="34"/>
    </location>
</feature>
<comment type="similarity">
    <text evidence="2">Belongs to the respirovirus protein C family.</text>
</comment>
<evidence type="ECO:0000256" key="1">
    <source>
        <dbReference type="SAM" id="MobiDB-lite"/>
    </source>
</evidence>
<evidence type="ECO:0000305" key="2"/>
<organism>
    <name type="scientific">Human parainfluenza 1 virus (strain C39)</name>
    <name type="common">HPIV-1</name>
    <dbReference type="NCBI Taxonomy" id="11210"/>
    <lineage>
        <taxon>Viruses</taxon>
        <taxon>Riboviria</taxon>
        <taxon>Orthornavirae</taxon>
        <taxon>Negarnaviricota</taxon>
        <taxon>Haploviricotina</taxon>
        <taxon>Monjiviricetes</taxon>
        <taxon>Mononegavirales</taxon>
        <taxon>Paramyxoviridae</taxon>
        <taxon>Feraresvirinae</taxon>
        <taxon>Respirovirus</taxon>
        <taxon>Respirovirus laryngotracheitidis</taxon>
    </lineage>
</organism>
<dbReference type="EMBL" id="M37792">
    <property type="protein sequence ID" value="AAA46869.1"/>
    <property type="molecule type" value="mRNA"/>
</dbReference>
<dbReference type="PIR" id="B39929">
    <property type="entry name" value="MNNZ39"/>
</dbReference>
<dbReference type="SMR" id="P28055"/>
<dbReference type="GO" id="GO:0052170">
    <property type="term" value="P:symbiont-mediated suppression of host innate immune response"/>
    <property type="evidence" value="ECO:0007669"/>
    <property type="project" value="UniProtKB-KW"/>
</dbReference>
<dbReference type="GO" id="GO:0039563">
    <property type="term" value="P:symbiont-mediated suppression of host JAK-STAT cascade via inhibition of STAT1 activity"/>
    <property type="evidence" value="ECO:0000250"/>
    <property type="project" value="UniProtKB"/>
</dbReference>
<dbReference type="GO" id="GO:0039564">
    <property type="term" value="P:symbiont-mediated suppression of host JAK-STAT cascade via inhibition of STAT2 activity"/>
    <property type="evidence" value="ECO:0007669"/>
    <property type="project" value="UniProtKB-KW"/>
</dbReference>
<dbReference type="GO" id="GO:0039502">
    <property type="term" value="P:symbiont-mediated suppression of host type I interferon-mediated signaling pathway"/>
    <property type="evidence" value="ECO:0007669"/>
    <property type="project" value="UniProtKB-KW"/>
</dbReference>
<dbReference type="InterPro" id="IPR002608">
    <property type="entry name" value="Paramyxo_C"/>
</dbReference>
<dbReference type="Pfam" id="PF01692">
    <property type="entry name" value="Paramyxo_C"/>
    <property type="match status" value="1"/>
</dbReference>
<reference key="1">
    <citation type="journal article" date="1991" name="J. Virol.">
        <title>The P gene of human parainfluenza virus type 1 encodes P and C proteins but not a cysteine-rich V protein.</title>
        <authorList>
            <person name="Matsuoka Y."/>
            <person name="Curran J."/>
            <person name="Pelet T."/>
            <person name="Kolakofsky D."/>
            <person name="Ray R."/>
            <person name="Compans R.W."/>
        </authorList>
    </citation>
    <scope>NUCLEOTIDE SEQUENCE [MRNA]</scope>
</reference>
<keyword id="KW-0945">Host-virus interaction</keyword>
<keyword id="KW-1090">Inhibition of host innate immune response by virus</keyword>
<keyword id="KW-1114">Inhibition of host interferon signaling pathway by virus</keyword>
<keyword id="KW-1105">Inhibition of host STAT1 by virus</keyword>
<keyword id="KW-1106">Inhibition of host STAT2 by virus</keyword>
<keyword id="KW-0922">Interferon antiviral system evasion</keyword>
<keyword id="KW-0899">Viral immunoevasion</keyword>
<proteinExistence type="evidence at transcript level"/>